<name>YQGF_GLUOX</name>
<accession>Q5FND1</accession>
<evidence type="ECO:0000255" key="1">
    <source>
        <dbReference type="HAMAP-Rule" id="MF_00651"/>
    </source>
</evidence>
<feature type="chain" id="PRO_0000172069" description="Putative pre-16S rRNA nuclease">
    <location>
        <begin position="1"/>
        <end position="160"/>
    </location>
</feature>
<gene>
    <name type="ordered locus">GOX2385</name>
</gene>
<protein>
    <recommendedName>
        <fullName evidence="1">Putative pre-16S rRNA nuclease</fullName>
        <ecNumber evidence="1">3.1.-.-</ecNumber>
    </recommendedName>
</protein>
<reference key="1">
    <citation type="journal article" date="2005" name="Nat. Biotechnol.">
        <title>Complete genome sequence of the acetic acid bacterium Gluconobacter oxydans.</title>
        <authorList>
            <person name="Prust C."/>
            <person name="Hoffmeister M."/>
            <person name="Liesegang H."/>
            <person name="Wiezer A."/>
            <person name="Fricke W.F."/>
            <person name="Ehrenreich A."/>
            <person name="Gottschalk G."/>
            <person name="Deppenmeier U."/>
        </authorList>
    </citation>
    <scope>NUCLEOTIDE SEQUENCE [LARGE SCALE GENOMIC DNA]</scope>
    <source>
        <strain>621H</strain>
    </source>
</reference>
<keyword id="KW-0963">Cytoplasm</keyword>
<keyword id="KW-0378">Hydrolase</keyword>
<keyword id="KW-0540">Nuclease</keyword>
<keyword id="KW-1185">Reference proteome</keyword>
<keyword id="KW-0690">Ribosome biogenesis</keyword>
<sequence>MPLFNPHDLRNLLQSGQRVLGLDPGSKTIGVALTDVSLMLASPLIGLKRRKLGENAQELAKIVRTQDVGALVVGLPLSLDGSFGPAARAASDWTQALSEKLGIPAGLWDERLSSSAVNRFLIKDADMTRGRRAEVVDKMAAAYMLQGWLDASRPEAPEIF</sequence>
<organism>
    <name type="scientific">Gluconobacter oxydans (strain 621H)</name>
    <name type="common">Gluconobacter suboxydans</name>
    <dbReference type="NCBI Taxonomy" id="290633"/>
    <lineage>
        <taxon>Bacteria</taxon>
        <taxon>Pseudomonadati</taxon>
        <taxon>Pseudomonadota</taxon>
        <taxon>Alphaproteobacteria</taxon>
        <taxon>Acetobacterales</taxon>
        <taxon>Acetobacteraceae</taxon>
        <taxon>Gluconobacter</taxon>
    </lineage>
</organism>
<proteinExistence type="inferred from homology"/>
<comment type="function">
    <text evidence="1">Could be a nuclease involved in processing of the 5'-end of pre-16S rRNA.</text>
</comment>
<comment type="subcellular location">
    <subcellularLocation>
        <location evidence="1">Cytoplasm</location>
    </subcellularLocation>
</comment>
<comment type="similarity">
    <text evidence="1">Belongs to the YqgF nuclease family.</text>
</comment>
<dbReference type="EC" id="3.1.-.-" evidence="1"/>
<dbReference type="EMBL" id="CP000009">
    <property type="protein sequence ID" value="AAW62116.1"/>
    <property type="molecule type" value="Genomic_DNA"/>
</dbReference>
<dbReference type="RefSeq" id="WP_011253885.1">
    <property type="nucleotide sequence ID" value="NC_006677.1"/>
</dbReference>
<dbReference type="SMR" id="Q5FND1"/>
<dbReference type="STRING" id="290633.GOX2385"/>
<dbReference type="KEGG" id="gox:GOX2385"/>
<dbReference type="eggNOG" id="COG0816">
    <property type="taxonomic scope" value="Bacteria"/>
</dbReference>
<dbReference type="HOGENOM" id="CLU_098240_1_1_5"/>
<dbReference type="Proteomes" id="UP000006375">
    <property type="component" value="Chromosome"/>
</dbReference>
<dbReference type="GO" id="GO:0005829">
    <property type="term" value="C:cytosol"/>
    <property type="evidence" value="ECO:0007669"/>
    <property type="project" value="TreeGrafter"/>
</dbReference>
<dbReference type="GO" id="GO:0004518">
    <property type="term" value="F:nuclease activity"/>
    <property type="evidence" value="ECO:0007669"/>
    <property type="project" value="UniProtKB-KW"/>
</dbReference>
<dbReference type="GO" id="GO:0000967">
    <property type="term" value="P:rRNA 5'-end processing"/>
    <property type="evidence" value="ECO:0007669"/>
    <property type="project" value="UniProtKB-UniRule"/>
</dbReference>
<dbReference type="CDD" id="cd16964">
    <property type="entry name" value="YqgF"/>
    <property type="match status" value="1"/>
</dbReference>
<dbReference type="Gene3D" id="3.30.420.140">
    <property type="entry name" value="YqgF/RNase H-like domain"/>
    <property type="match status" value="1"/>
</dbReference>
<dbReference type="HAMAP" id="MF_00651">
    <property type="entry name" value="Nuclease_YqgF"/>
    <property type="match status" value="1"/>
</dbReference>
<dbReference type="InterPro" id="IPR012337">
    <property type="entry name" value="RNaseH-like_sf"/>
</dbReference>
<dbReference type="InterPro" id="IPR005227">
    <property type="entry name" value="YqgF"/>
</dbReference>
<dbReference type="InterPro" id="IPR006641">
    <property type="entry name" value="YqgF/RNaseH-like_dom"/>
</dbReference>
<dbReference type="InterPro" id="IPR037027">
    <property type="entry name" value="YqgF/RNaseH-like_dom_sf"/>
</dbReference>
<dbReference type="NCBIfam" id="TIGR00250">
    <property type="entry name" value="RNAse_H_YqgF"/>
    <property type="match status" value="1"/>
</dbReference>
<dbReference type="PANTHER" id="PTHR33317">
    <property type="entry name" value="POLYNUCLEOTIDYL TRANSFERASE, RIBONUCLEASE H-LIKE SUPERFAMILY PROTEIN"/>
    <property type="match status" value="1"/>
</dbReference>
<dbReference type="PANTHER" id="PTHR33317:SF4">
    <property type="entry name" value="POLYNUCLEOTIDYL TRANSFERASE, RIBONUCLEASE H-LIKE SUPERFAMILY PROTEIN"/>
    <property type="match status" value="1"/>
</dbReference>
<dbReference type="Pfam" id="PF03652">
    <property type="entry name" value="RuvX"/>
    <property type="match status" value="1"/>
</dbReference>
<dbReference type="SMART" id="SM00732">
    <property type="entry name" value="YqgFc"/>
    <property type="match status" value="1"/>
</dbReference>
<dbReference type="SUPFAM" id="SSF53098">
    <property type="entry name" value="Ribonuclease H-like"/>
    <property type="match status" value="1"/>
</dbReference>